<accession>C5M5D9</accession>
<keyword id="KW-0496">Mitochondrion</keyword>
<keyword id="KW-0507">mRNA processing</keyword>
<keyword id="KW-0508">mRNA splicing</keyword>
<keyword id="KW-1185">Reference proteome</keyword>
<keyword id="KW-0677">Repeat</keyword>
<keyword id="KW-0809">Transit peptide</keyword>
<protein>
    <recommendedName>
        <fullName>Mitochondrial 15S rRNA processing factor CCM1</fullName>
    </recommendedName>
</protein>
<dbReference type="EMBL" id="GG692396">
    <property type="protein sequence ID" value="EER35255.1"/>
    <property type="molecule type" value="Genomic_DNA"/>
</dbReference>
<dbReference type="RefSeq" id="XP_002547810.1">
    <property type="nucleotide sequence ID" value="XM_002547764.1"/>
</dbReference>
<dbReference type="SMR" id="C5M5D9"/>
<dbReference type="STRING" id="294747.C5M5D9"/>
<dbReference type="EnsemblFungi" id="CTRG_02117-t43_1">
    <property type="protein sequence ID" value="CTRG_02117-t43_1-p1"/>
    <property type="gene ID" value="CTRG_02117"/>
</dbReference>
<dbReference type="GeneID" id="8297214"/>
<dbReference type="KEGG" id="ctp:CTRG_02117"/>
<dbReference type="VEuPathDB" id="FungiDB:CTRG_02117"/>
<dbReference type="eggNOG" id="ENOG502QUX2">
    <property type="taxonomic scope" value="Eukaryota"/>
</dbReference>
<dbReference type="HOGENOM" id="CLU_019745_0_0_1"/>
<dbReference type="OrthoDB" id="185373at2759"/>
<dbReference type="Proteomes" id="UP000002037">
    <property type="component" value="Unassembled WGS sequence"/>
</dbReference>
<dbReference type="GO" id="GO:0005739">
    <property type="term" value="C:mitochondrion"/>
    <property type="evidence" value="ECO:0007669"/>
    <property type="project" value="UniProtKB-SubCell"/>
</dbReference>
<dbReference type="GO" id="GO:0006397">
    <property type="term" value="P:mRNA processing"/>
    <property type="evidence" value="ECO:0007669"/>
    <property type="project" value="UniProtKB-KW"/>
</dbReference>
<dbReference type="GO" id="GO:0008380">
    <property type="term" value="P:RNA splicing"/>
    <property type="evidence" value="ECO:0007669"/>
    <property type="project" value="UniProtKB-KW"/>
</dbReference>
<dbReference type="Gene3D" id="1.25.40.10">
    <property type="entry name" value="Tetratricopeptide repeat domain"/>
    <property type="match status" value="1"/>
</dbReference>
<dbReference type="InterPro" id="IPR002885">
    <property type="entry name" value="Pentatricopeptide_rpt"/>
</dbReference>
<dbReference type="InterPro" id="IPR033443">
    <property type="entry name" value="PROP1-like_PPR_dom"/>
</dbReference>
<dbReference type="InterPro" id="IPR011990">
    <property type="entry name" value="TPR-like_helical_dom_sf"/>
</dbReference>
<dbReference type="NCBIfam" id="TIGR00756">
    <property type="entry name" value="PPR"/>
    <property type="match status" value="1"/>
</dbReference>
<dbReference type="PANTHER" id="PTHR47447">
    <property type="entry name" value="OS03G0856100 PROTEIN"/>
    <property type="match status" value="1"/>
</dbReference>
<dbReference type="PANTHER" id="PTHR47447:SF17">
    <property type="entry name" value="OS12G0638900 PROTEIN"/>
    <property type="match status" value="1"/>
</dbReference>
<dbReference type="Pfam" id="PF17177">
    <property type="entry name" value="PPR_long"/>
    <property type="match status" value="1"/>
</dbReference>
<dbReference type="PROSITE" id="PS51375">
    <property type="entry name" value="PPR"/>
    <property type="match status" value="5"/>
</dbReference>
<feature type="transit peptide" description="Mitochondrion" evidence="2">
    <location>
        <begin position="1"/>
        <end position="76"/>
    </location>
</feature>
<feature type="chain" id="PRO_0000402260" description="Mitochondrial 15S rRNA processing factor CCM1" evidence="2">
    <location>
        <begin position="77"/>
        <end position="753"/>
    </location>
</feature>
<feature type="repeat" description="PPR 1" evidence="3">
    <location>
        <begin position="262"/>
        <end position="296"/>
    </location>
</feature>
<feature type="repeat" description="PPR 2" evidence="3">
    <location>
        <begin position="297"/>
        <end position="332"/>
    </location>
</feature>
<feature type="repeat" description="PPR 3" evidence="3">
    <location>
        <begin position="335"/>
        <end position="369"/>
    </location>
</feature>
<feature type="repeat" description="PPR 4" evidence="3">
    <location>
        <begin position="370"/>
        <end position="405"/>
    </location>
</feature>
<feature type="repeat" description="PPR 5" evidence="3">
    <location>
        <begin position="406"/>
        <end position="441"/>
    </location>
</feature>
<evidence type="ECO:0000250" key="1">
    <source>
        <dbReference type="UniProtKB" id="P48237"/>
    </source>
</evidence>
<evidence type="ECO:0000255" key="2"/>
<evidence type="ECO:0000255" key="3">
    <source>
        <dbReference type="PROSITE-ProRule" id="PRU00708"/>
    </source>
</evidence>
<evidence type="ECO:0000305" key="4"/>
<gene>
    <name type="primary">CCM1</name>
    <name type="ORF">CTRG_02117</name>
</gene>
<sequence length="753" mass="86395">MLRHTRNKCLSIIPRRYLFVPSNSFTDSKKKNVIRAKPRVKSTPKIMEDEAHQKKPQIDKSLIAKAKKDLRELRSLAKDVSEYIEPKDIDSLTTTKKISTELPPIDIDEATEDIFQEISDSKGKMKKHPKALPPSLSFPEKINQRLGLVSDLLVSRESTSNLPEKTRNDKWNILLTQLNAAGGFKELSEVDIRSFVNKIPLRSLRNLIPFIENMYHEAGVSVHYNTYYSFIRALSLGASISDTQIQVIEGYFNEIEKQTELKMDHYETKIAVYVKNKNKKKIEEVLGVMKAKNLPLSKSIYKSILSSYVYYTKDHRRAIEVFDSMKFLSESTKPDAKVYAQIIISCMMNDDIDKGLDLLQEMRDNNVKPNQSILSALAKGCARSRQHKFQAWNHLFQIYEYGWTPTLQTFEHMLYISAKDGDVELTRALFYKMLETNSVTPSAFISLMLAYANYQSPTSRTEPFLVSLTENGRLFKQNIMANVDFSKPIHGFPFLPTSRIPDGKFILAESSAIWAYTIMHNPSFVNNPHVAAPYLNIAYELGEFNDFKDRLNESTYLNDEGIPKVREIEIIEPNEETESPDSELQVVEPNENDTGLVKSPILNKLSGHLKDNRHKAPRDSMIYQIALDAAGKFKKFDFAQEIIKERGQFRKSNMFKKLSSKEQTKQDFQFAEKLVYCYVKMNLIEDAYSVVLSSVDRFPWGWKQLVPLNTAAINLGSSELAAAVRKIAQSNQVKHHGKIKSNDYKKYVMKRGY</sequence>
<organism>
    <name type="scientific">Candida tropicalis (strain ATCC MYA-3404 / T1)</name>
    <name type="common">Yeast</name>
    <dbReference type="NCBI Taxonomy" id="294747"/>
    <lineage>
        <taxon>Eukaryota</taxon>
        <taxon>Fungi</taxon>
        <taxon>Dikarya</taxon>
        <taxon>Ascomycota</taxon>
        <taxon>Saccharomycotina</taxon>
        <taxon>Pichiomycetes</taxon>
        <taxon>Debaryomycetaceae</taxon>
        <taxon>Candida/Lodderomyces clade</taxon>
        <taxon>Candida</taxon>
    </lineage>
</organism>
<comment type="function">
    <text evidence="1">Regulates mitochondrial small subunit maturation by controlling 15S rRNA 5'-end processing. Localizes to the 5' precursor of the 15S rRNA in a position that is subsequently occupied by mS47 in the mature yeast mtSSU. Uses structure and sequence-specific RNA recognition, binding to a single-stranded region of the precursor and specifically recognizing bases -6 to -1. The exchange of Ccm1 for mS47 is coupled to the irreversible removal of precursor rRNA that is accompanied by conformational changes of the mitoribosomal proteins uS5m and mS26. These conformational changes signal completion of 5'-end rRNA processing through protection of the mature 5'-end of the 15S rRNA and stabilization of mS47. The removal of the 5' precursor together with the dissociation of Ccm1 may be catalyzed by the 5'-3' exoribonuclease Pet127. Involved in the specific removal of group I introns in mitochondrial encoded transcripts.</text>
</comment>
<comment type="subunit">
    <text evidence="1">Binds to mitochondrial small subunit 15S rRNA.</text>
</comment>
<comment type="subcellular location">
    <subcellularLocation>
        <location evidence="1">Mitochondrion</location>
    </subcellularLocation>
</comment>
<comment type="miscellaneous">
    <text evidence="1">Involved in mitochondrial-nuclear incompatibility, a major determinant in reproductive isolation between species, through hybrid incompatibility of Ccm1 and its interacting partner 15S rRNA between yeast species.</text>
</comment>
<comment type="similarity">
    <text evidence="4">Belongs to the CCM1 family.</text>
</comment>
<reference key="1">
    <citation type="journal article" date="2009" name="Nature">
        <title>Evolution of pathogenicity and sexual reproduction in eight Candida genomes.</title>
        <authorList>
            <person name="Butler G."/>
            <person name="Rasmussen M.D."/>
            <person name="Lin M.F."/>
            <person name="Santos M.A.S."/>
            <person name="Sakthikumar S."/>
            <person name="Munro C.A."/>
            <person name="Rheinbay E."/>
            <person name="Grabherr M."/>
            <person name="Forche A."/>
            <person name="Reedy J.L."/>
            <person name="Agrafioti I."/>
            <person name="Arnaud M.B."/>
            <person name="Bates S."/>
            <person name="Brown A.J.P."/>
            <person name="Brunke S."/>
            <person name="Costanzo M.C."/>
            <person name="Fitzpatrick D.A."/>
            <person name="de Groot P.W.J."/>
            <person name="Harris D."/>
            <person name="Hoyer L.L."/>
            <person name="Hube B."/>
            <person name="Klis F.M."/>
            <person name="Kodira C."/>
            <person name="Lennard N."/>
            <person name="Logue M.E."/>
            <person name="Martin R."/>
            <person name="Neiman A.M."/>
            <person name="Nikolaou E."/>
            <person name="Quail M.A."/>
            <person name="Quinn J."/>
            <person name="Santos M.C."/>
            <person name="Schmitzberger F.F."/>
            <person name="Sherlock G."/>
            <person name="Shah P."/>
            <person name="Silverstein K.A.T."/>
            <person name="Skrzypek M.S."/>
            <person name="Soll D."/>
            <person name="Staggs R."/>
            <person name="Stansfield I."/>
            <person name="Stumpf M.P.H."/>
            <person name="Sudbery P.E."/>
            <person name="Srikantha T."/>
            <person name="Zeng Q."/>
            <person name="Berman J."/>
            <person name="Berriman M."/>
            <person name="Heitman J."/>
            <person name="Gow N.A.R."/>
            <person name="Lorenz M.C."/>
            <person name="Birren B.W."/>
            <person name="Kellis M."/>
            <person name="Cuomo C.A."/>
        </authorList>
    </citation>
    <scope>NUCLEOTIDE SEQUENCE [LARGE SCALE GENOMIC DNA]</scope>
    <source>
        <strain>ATCC MYA-3404 / T1</strain>
    </source>
</reference>
<proteinExistence type="inferred from homology"/>
<name>CCM1_CANTT</name>